<proteinExistence type="evidence at protein level"/>
<dbReference type="SMR" id="P84988"/>
<dbReference type="Proteomes" id="UP000694918">
    <property type="component" value="Unplaced"/>
</dbReference>
<dbReference type="GO" id="GO:0009535">
    <property type="term" value="C:chloroplast thylakoid membrane"/>
    <property type="evidence" value="ECO:0007669"/>
    <property type="project" value="UniProtKB-SubCell"/>
</dbReference>
<dbReference type="GO" id="GO:0009522">
    <property type="term" value="C:photosystem I"/>
    <property type="evidence" value="ECO:0007669"/>
    <property type="project" value="UniProtKB-KW"/>
</dbReference>
<dbReference type="GO" id="GO:0009523">
    <property type="term" value="C:photosystem II"/>
    <property type="evidence" value="ECO:0007669"/>
    <property type="project" value="UniProtKB-KW"/>
</dbReference>
<dbReference type="GO" id="GO:0016168">
    <property type="term" value="F:chlorophyll binding"/>
    <property type="evidence" value="ECO:0007669"/>
    <property type="project" value="UniProtKB-KW"/>
</dbReference>
<dbReference type="GO" id="GO:0046872">
    <property type="term" value="F:metal ion binding"/>
    <property type="evidence" value="ECO:0007669"/>
    <property type="project" value="UniProtKB-KW"/>
</dbReference>
<dbReference type="GO" id="GO:0015979">
    <property type="term" value="P:photosynthesis"/>
    <property type="evidence" value="ECO:0007669"/>
    <property type="project" value="UniProtKB-KW"/>
</dbReference>
<feature type="chain" id="PRO_0000300508" description="Chlorophyll a-b binding protein 1, chloroplastic">
    <location>
        <begin position="1" status="less than"/>
        <end position="53" status="greater than"/>
    </location>
</feature>
<feature type="binding site" description="axial binding residue" evidence="1">
    <location>
        <position position="18"/>
    </location>
    <ligand>
        <name>chlorophyll b</name>
        <dbReference type="ChEBI" id="CHEBI:61721"/>
        <label>1</label>
    </ligand>
    <ligandPart>
        <name>Mg</name>
        <dbReference type="ChEBI" id="CHEBI:25107"/>
    </ligandPart>
</feature>
<feature type="binding site" description="axial binding residue" evidence="2">
    <location>
        <position position="48"/>
    </location>
    <ligand>
        <name>chlorophyll a</name>
        <dbReference type="ChEBI" id="CHEBI:58416"/>
        <label>1</label>
    </ligand>
    <ligandPart>
        <name>Mg</name>
        <dbReference type="ChEBI" id="CHEBI:25107"/>
    </ligandPart>
</feature>
<feature type="binding site" description="axial binding residue" evidence="2">
    <location>
        <position position="51"/>
    </location>
    <ligand>
        <name>chlorophyll a</name>
        <dbReference type="ChEBI" id="CHEBI:58416"/>
        <label>2</label>
    </ligand>
    <ligandPart>
        <name>Mg</name>
        <dbReference type="ChEBI" id="CHEBI:25107"/>
    </ligandPart>
</feature>
<feature type="binding site" evidence="2">
    <location>
        <position position="53"/>
    </location>
    <ligand>
        <name>chlorophyll b</name>
        <dbReference type="ChEBI" id="CHEBI:61721"/>
        <label>2</label>
    </ligand>
</feature>
<feature type="non-consecutive residues" evidence="5">
    <location>
        <begin position="16"/>
        <end position="17"/>
    </location>
</feature>
<feature type="non-consecutive residues" evidence="5">
    <location>
        <begin position="26"/>
        <end position="27"/>
    </location>
</feature>
<feature type="non-consecutive residues" evidence="5">
    <location>
        <begin position="36"/>
        <end position="37"/>
    </location>
</feature>
<feature type="non-terminal residue" evidence="5">
    <location>
        <position position="1"/>
    </location>
</feature>
<feature type="non-terminal residue" evidence="5">
    <location>
        <position position="53"/>
    </location>
</feature>
<comment type="function">
    <text evidence="6">The light-harvesting complex (LHC) functions as a light receptor, it captures and delivers excitation energy to photosystems with which it is closely associated.</text>
</comment>
<comment type="cofactor">
    <text evidence="2">Binds at least 14 chlorophylls (8 Chl-a and 6 Chl-b) and carotenoids such as lutein and neoxanthin.</text>
</comment>
<comment type="subunit">
    <text evidence="6">The LHC complex consists of chlorophyll a-b binding proteins.</text>
</comment>
<comment type="subcellular location">
    <subcellularLocation>
        <location evidence="1">Plastid</location>
        <location evidence="1">Chloroplast thylakoid membrane</location>
        <topology evidence="1">Multi-pass membrane protein</topology>
    </subcellularLocation>
</comment>
<comment type="domain">
    <text evidence="6">The N-terminus of the protein extends into the stroma where it is involved with adhesion of granal membranes and post-translational modifications; both are believed to mediate the distribution of excitation energy between photosystems I and II.</text>
</comment>
<comment type="PTM">
    <text evidence="2">Photoregulated by reversible phosphorylation of its threonine residues.</text>
</comment>
<comment type="similarity">
    <text evidence="3">Belongs to the light-harvesting chlorophyll a/b-binding (LHC) protein family.</text>
</comment>
<comment type="caution">
    <text evidence="4">The order of the peptides shown is unknown.</text>
</comment>
<evidence type="ECO:0000250" key="1"/>
<evidence type="ECO:0000250" key="2">
    <source>
        <dbReference type="UniProtKB" id="P12333"/>
    </source>
</evidence>
<evidence type="ECO:0000255" key="3"/>
<evidence type="ECO:0000269" key="4">
    <source ref="1"/>
</evidence>
<evidence type="ECO:0000303" key="5">
    <source ref="1"/>
</evidence>
<evidence type="ECO:0000305" key="6"/>
<protein>
    <recommendedName>
        <fullName>Chlorophyll a-b binding protein 1, chloroplastic</fullName>
    </recommendedName>
    <alternativeName>
        <fullName>LHCII type I CAB-1</fullName>
        <shortName>LHCP</shortName>
    </alternativeName>
</protein>
<organism>
    <name type="scientific">Populus euphratica</name>
    <name type="common">Euphrates poplar</name>
    <dbReference type="NCBI Taxonomy" id="75702"/>
    <lineage>
        <taxon>Eukaryota</taxon>
        <taxon>Viridiplantae</taxon>
        <taxon>Streptophyta</taxon>
        <taxon>Embryophyta</taxon>
        <taxon>Tracheophyta</taxon>
        <taxon>Spermatophyta</taxon>
        <taxon>Magnoliopsida</taxon>
        <taxon>eudicotyledons</taxon>
        <taxon>Gunneridae</taxon>
        <taxon>Pentapetalae</taxon>
        <taxon>rosids</taxon>
        <taxon>fabids</taxon>
        <taxon>Malpighiales</taxon>
        <taxon>Salicaceae</taxon>
        <taxon>Saliceae</taxon>
        <taxon>Populus</taxon>
    </lineage>
</organism>
<keyword id="KW-0148">Chlorophyll</keyword>
<keyword id="KW-0150">Chloroplast</keyword>
<keyword id="KW-0157">Chromophore</keyword>
<keyword id="KW-0903">Direct protein sequencing</keyword>
<keyword id="KW-0460">Magnesium</keyword>
<keyword id="KW-0472">Membrane</keyword>
<keyword id="KW-0479">Metal-binding</keyword>
<keyword id="KW-0597">Phosphoprotein</keyword>
<keyword id="KW-0602">Photosynthesis</keyword>
<keyword id="KW-0603">Photosystem I</keyword>
<keyword id="KW-0604">Photosystem II</keyword>
<keyword id="KW-0934">Plastid</keyword>
<keyword id="KW-1185">Reference proteome</keyword>
<keyword id="KW-0793">Thylakoid</keyword>
<keyword id="KW-0812">Transmembrane</keyword>
<accession>P84988</accession>
<name>CB21_POPEU</name>
<reference evidence="6" key="1">
    <citation type="thesis" date="2006" institute="ICAT-FCUL" country="Portugal">
        <title>Molecular analysis of Populus euphratica Oliv. response to moderate heat stress.</title>
        <authorList>
            <person name="Ferreira S."/>
        </authorList>
    </citation>
    <scope>PROTEIN SEQUENCE</scope>
    <source>
        <tissue evidence="4">Leaf</tissue>
    </source>
</reference>
<sequence length="53" mass="6170">TGALLLDGNTLNYFGKIFLPDGLLDRYQAFELIHARKPEDFEKYQAFELIHAR</sequence>